<sequence length="124" mass="13967">MLSPDLPDSAWNTRLLCRVMLCLLGAGSVAAGVIQSPRHLIKEKRETATLKCYPIPRHDTVYWYQQGPGQDPQFLISFYEKMQSDKGSIPDRFSAQQFSDYHSELNMSSLELGDSALYFCASSL</sequence>
<keyword id="KW-1064">Adaptive immunity</keyword>
<keyword id="KW-1003">Cell membrane</keyword>
<keyword id="KW-1015">Disulfide bond</keyword>
<keyword id="KW-0325">Glycoprotein</keyword>
<keyword id="KW-0391">Immunity</keyword>
<keyword id="KW-0393">Immunoglobulin domain</keyword>
<keyword id="KW-0472">Membrane</keyword>
<keyword id="KW-0675">Receptor</keyword>
<keyword id="KW-1185">Reference proteome</keyword>
<keyword id="KW-0732">Signal</keyword>
<keyword id="KW-1279">T cell receptor</keyword>
<comment type="function">
    <text evidence="3 5 6 7">V region of the variable domain of T cell receptor (TR) beta chain that participates in the antigen recognition (PubMed:24600447). Alpha-beta T cell receptors are antigen specific receptors which are essential to the immune response and are present on the cell surface of T lymphocytes. Recognize peptide-major histocompatibility (MH) (pMH) complexes that are displayed by antigen presenting cells (APC), a prerequisite for efficient T cell adaptive immunity against pathogens (PubMed:25493333). Binding of alpha-beta TR to pMH complex initiates TR-CD3 clustering on the cell surface and intracellular activation of LCK that phosphorylates the ITAM motifs of CD3G, CD3D, CD3E and CD247 enabling the recruitment of ZAP70. In turn ZAP70 phosphorylates LAT, which recruits numerous signaling molecules to form the LAT signalosome. The LAT signalosome propagates signal branching to three major signaling pathways, the calcium, the mitogen-activated protein kinase (MAPK) kinase and the nuclear factor NF-kappa-B (NF-kB) pathways, leading to the mobilization of transcription factors that are critical for gene expression and essential for T cell growth and differentiation (PubMed:23524462). The T cell repertoire is generated in the thymus, by V-(D)-J rearrangement. This repertoire is then shaped by intrathymic selection events to generate a peripheral T cell pool of self-MH restricted, non-autoaggressive T cells. Post-thymic interaction of alpha-beta TR with the pMH complexes shapes TR structural and functional avidity (PubMed:15040585).</text>
</comment>
<comment type="subunit">
    <text evidence="4">Alpha-beta TR is a heterodimer composed of an alpha and beta chain; disulfide-linked. The alpha-beta TR is associated with the transmembrane signaling CD3 coreceptor proteins to form the TR-CD3 (TcR or TCR). The assembly of alpha-beta TR heterodimers with CD3 occurs in the endoplasmic reticulum where a single alpha-beta TR heterodimer associates with one CD3D-CD3E heterodimer, one CD3G-CD3E heterodimer and one CD247 homodimer forming a stable octameric structure. CD3D-CD3E and CD3G-CD3E heterodimers preferentially associate with TR alpha and TR beta chains, respectively. The association of the CD247 homodimer is the last step of TcR assembly in the endoplasmic reticulum and is required for transport to the cell surface.</text>
</comment>
<comment type="subcellular location">
    <subcellularLocation>
        <location evidence="4">Cell membrane</location>
    </subcellularLocation>
</comment>
<comment type="polymorphism">
    <text evidence="9">There are several alleles. The sequence shown is that of IMGT allele TRBV13*01.</text>
</comment>
<reference key="1">
    <citation type="journal article" date="2003" name="Nature">
        <title>The DNA sequence of human chromosome 7.</title>
        <authorList>
            <person name="Hillier L.W."/>
            <person name="Fulton R.S."/>
            <person name="Fulton L.A."/>
            <person name="Graves T.A."/>
            <person name="Pepin K.H."/>
            <person name="Wagner-McPherson C."/>
            <person name="Layman D."/>
            <person name="Maas J."/>
            <person name="Jaeger S."/>
            <person name="Walker R."/>
            <person name="Wylie K."/>
            <person name="Sekhon M."/>
            <person name="Becker M.C."/>
            <person name="O'Laughlin M.D."/>
            <person name="Schaller M.E."/>
            <person name="Fewell G.A."/>
            <person name="Delehaunty K.D."/>
            <person name="Miner T.L."/>
            <person name="Nash W.E."/>
            <person name="Cordes M."/>
            <person name="Du H."/>
            <person name="Sun H."/>
            <person name="Edwards J."/>
            <person name="Bradshaw-Cordum H."/>
            <person name="Ali J."/>
            <person name="Andrews S."/>
            <person name="Isak A."/>
            <person name="Vanbrunt A."/>
            <person name="Nguyen C."/>
            <person name="Du F."/>
            <person name="Lamar B."/>
            <person name="Courtney L."/>
            <person name="Kalicki J."/>
            <person name="Ozersky P."/>
            <person name="Bielicki L."/>
            <person name="Scott K."/>
            <person name="Holmes A."/>
            <person name="Harkins R."/>
            <person name="Harris A."/>
            <person name="Strong C.M."/>
            <person name="Hou S."/>
            <person name="Tomlinson C."/>
            <person name="Dauphin-Kohlberg S."/>
            <person name="Kozlowicz-Reilly A."/>
            <person name="Leonard S."/>
            <person name="Rohlfing T."/>
            <person name="Rock S.M."/>
            <person name="Tin-Wollam A.-M."/>
            <person name="Abbott A."/>
            <person name="Minx P."/>
            <person name="Maupin R."/>
            <person name="Strowmatt C."/>
            <person name="Latreille P."/>
            <person name="Miller N."/>
            <person name="Johnson D."/>
            <person name="Murray J."/>
            <person name="Woessner J.P."/>
            <person name="Wendl M.C."/>
            <person name="Yang S.-P."/>
            <person name="Schultz B.R."/>
            <person name="Wallis J.W."/>
            <person name="Spieth J."/>
            <person name="Bieri T.A."/>
            <person name="Nelson J.O."/>
            <person name="Berkowicz N."/>
            <person name="Wohldmann P.E."/>
            <person name="Cook L.L."/>
            <person name="Hickenbotham M.T."/>
            <person name="Eldred J."/>
            <person name="Williams D."/>
            <person name="Bedell J.A."/>
            <person name="Mardis E.R."/>
            <person name="Clifton S.W."/>
            <person name="Chissoe S.L."/>
            <person name="Marra M.A."/>
            <person name="Raymond C."/>
            <person name="Haugen E."/>
            <person name="Gillett W."/>
            <person name="Zhou Y."/>
            <person name="James R."/>
            <person name="Phelps K."/>
            <person name="Iadanoto S."/>
            <person name="Bubb K."/>
            <person name="Simms E."/>
            <person name="Levy R."/>
            <person name="Clendenning J."/>
            <person name="Kaul R."/>
            <person name="Kent W.J."/>
            <person name="Furey T.S."/>
            <person name="Baertsch R.A."/>
            <person name="Brent M.R."/>
            <person name="Keibler E."/>
            <person name="Flicek P."/>
            <person name="Bork P."/>
            <person name="Suyama M."/>
            <person name="Bailey J.A."/>
            <person name="Portnoy M.E."/>
            <person name="Torrents D."/>
            <person name="Chinwalla A.T."/>
            <person name="Gish W.R."/>
            <person name="Eddy S.R."/>
            <person name="McPherson J.D."/>
            <person name="Olson M.V."/>
            <person name="Eichler E.E."/>
            <person name="Green E.D."/>
            <person name="Waterston R.H."/>
            <person name="Wilson R.K."/>
        </authorList>
    </citation>
    <scope>NUCLEOTIDE SEQUENCE [LARGE SCALE GENOMIC DNA] (IMGT ALLELE TRBV13*01)</scope>
</reference>
<reference key="2">
    <citation type="book" date="2001" name="The T Cell Receptor FactsBook.">
        <title>The T Cell Receptor FactsBook.</title>
        <editorList>
            <person name="Lefranc M.P."/>
            <person name="Lefranc G."/>
        </editorList>
        <authorList>
            <person name="Lefranc M.P."/>
            <person name="Lefranc G."/>
        </authorList>
    </citation>
    <scope>NOMENCLATURE</scope>
</reference>
<reference key="3">
    <citation type="journal article" date="2004" name="Nat. Rev. Immunol.">
        <title>The many important facets of T-cell repertoire diversity.</title>
        <authorList>
            <person name="Nikolich-Zugich J."/>
            <person name="Slifka M.K."/>
            <person name="Messaoudi I."/>
        </authorList>
    </citation>
    <scope>REVIEW ON T CELL REPERTOIRE DIVERSITY</scope>
</reference>
<reference key="4">
    <citation type="journal article" date="2010" name="Cold Spring Harb. Perspect. Biol.">
        <title>Structural biology of the T-cell receptor: insights into receptor assembly, ligand recognition, and initiation of signaling.</title>
        <authorList>
            <person name="Wucherpfennig K.W."/>
            <person name="Gagnon E."/>
            <person name="Call M.J."/>
            <person name="Huseby E.S."/>
            <person name="Call M.E."/>
        </authorList>
    </citation>
    <scope>REVIEW ON T CELL RECEPTOR-CD3 COMPLEX ASSEMBLY</scope>
    <scope>SUBCELLULAR LOCATION</scope>
</reference>
<reference key="5">
    <citation type="journal article" date="2013" name="Nat. Rev. Immunol.">
        <title>T cell receptor signalling networks: branched, diversified and bounded.</title>
        <authorList>
            <person name="Brownlie R.J."/>
            <person name="Zamoyska R."/>
        </authorList>
    </citation>
    <scope>REVIEW ON T CELL RECEPTOR SIGNALING</scope>
</reference>
<reference key="6">
    <citation type="journal article" date="2014" name="Front. Immunol.">
        <title>Immunoglobulin and T Cell Receptor Genes: IMGT((R)) and the Birth and Rise of Immunoinformatics.</title>
        <authorList>
            <person name="Lefranc M.P."/>
        </authorList>
    </citation>
    <scope>NOMENCLATURE</scope>
</reference>
<reference key="7">
    <citation type="journal article" date="2015" name="Annu. Rev. Immunol.">
        <title>T cell antigen receptor recognition of antigen-presenting molecules.</title>
        <authorList>
            <person name="Rossjohn J."/>
            <person name="Gras S."/>
            <person name="Miles J.J."/>
            <person name="Turner S.J."/>
            <person name="Godfrey D.I."/>
            <person name="McCluskey J."/>
        </authorList>
    </citation>
    <scope>REVIEW ON FUNCTION</scope>
</reference>
<name>TVB13_HUMAN</name>
<gene>
    <name evidence="8" type="primary">TRBV13</name>
</gene>
<evidence type="ECO:0000255" key="1"/>
<evidence type="ECO:0000255" key="2">
    <source>
        <dbReference type="PROSITE-ProRule" id="PRU00114"/>
    </source>
</evidence>
<evidence type="ECO:0000303" key="3">
    <source>
    </source>
</evidence>
<evidence type="ECO:0000303" key="4">
    <source>
    </source>
</evidence>
<evidence type="ECO:0000303" key="5">
    <source>
    </source>
</evidence>
<evidence type="ECO:0000303" key="6">
    <source>
    </source>
</evidence>
<evidence type="ECO:0000303" key="7">
    <source>
    </source>
</evidence>
<evidence type="ECO:0000303" key="8">
    <source ref="2"/>
</evidence>
<evidence type="ECO:0000305" key="9"/>
<protein>
    <recommendedName>
        <fullName evidence="8">T cell receptor beta variable 13</fullName>
    </recommendedName>
</protein>
<accession>A0A0A6YYD4</accession>
<organism>
    <name type="scientific">Homo sapiens</name>
    <name type="common">Human</name>
    <dbReference type="NCBI Taxonomy" id="9606"/>
    <lineage>
        <taxon>Eukaryota</taxon>
        <taxon>Metazoa</taxon>
        <taxon>Chordata</taxon>
        <taxon>Craniata</taxon>
        <taxon>Vertebrata</taxon>
        <taxon>Euteleostomi</taxon>
        <taxon>Mammalia</taxon>
        <taxon>Eutheria</taxon>
        <taxon>Euarchontoglires</taxon>
        <taxon>Primates</taxon>
        <taxon>Haplorrhini</taxon>
        <taxon>Catarrhini</taxon>
        <taxon>Hominidae</taxon>
        <taxon>Homo</taxon>
    </lineage>
</organism>
<feature type="signal peptide" evidence="1">
    <location>
        <begin position="1"/>
        <end position="31"/>
    </location>
</feature>
<feature type="chain" id="PRO_5014017130" description="T cell receptor beta variable 13" evidence="1">
    <location>
        <begin position="32"/>
        <end position="124"/>
    </location>
</feature>
<feature type="domain" description="Ig-like" evidence="2">
    <location>
        <begin position="32"/>
        <end position="124" status="greater than"/>
    </location>
</feature>
<feature type="glycosylation site" description="N-linked (GlcNAc...) asparagine" evidence="1">
    <location>
        <position position="106"/>
    </location>
</feature>
<feature type="disulfide bond" evidence="2">
    <location>
        <begin position="52"/>
        <end position="120"/>
    </location>
</feature>
<feature type="non-terminal residue">
    <location>
        <position position="124"/>
    </location>
</feature>
<dbReference type="EMBL" id="AC244196">
    <property type="status" value="NOT_ANNOTATED_CDS"/>
    <property type="molecule type" value="Genomic_DNA"/>
</dbReference>
<dbReference type="SMR" id="A0A0A6YYD4"/>
<dbReference type="FunCoup" id="A0A0A6YYD4">
    <property type="interactions" value="552"/>
</dbReference>
<dbReference type="IMGT_GENE-DB" id="TRBV13"/>
<dbReference type="GlyCosmos" id="A0A0A6YYD4">
    <property type="glycosylation" value="1 site, No reported glycans"/>
</dbReference>
<dbReference type="GlyGen" id="A0A0A6YYD4">
    <property type="glycosylation" value="1 site"/>
</dbReference>
<dbReference type="BioMuta" id="ENSG00000276405"/>
<dbReference type="Ensembl" id="ENST00000614171.1">
    <property type="protein sequence ID" value="ENSP00000477580.1"/>
    <property type="gene ID" value="ENSG00000276405.1"/>
</dbReference>
<dbReference type="Ensembl" id="ENST00000633796.1">
    <property type="protein sequence ID" value="ENSP00000488778.1"/>
    <property type="gene ID" value="ENSG00000282407.1"/>
</dbReference>
<dbReference type="AGR" id="HGNC:12188"/>
<dbReference type="GeneCards" id="TRBV13"/>
<dbReference type="HGNC" id="HGNC:12188">
    <property type="gene designation" value="TRBV13"/>
</dbReference>
<dbReference type="HPA" id="ENSG00000276405">
    <property type="expression patterns" value="Tissue enriched (lymphoid)"/>
</dbReference>
<dbReference type="neXtProt" id="NX_A0A0A6YYD4"/>
<dbReference type="OpenTargets" id="ENSG00000276405"/>
<dbReference type="VEuPathDB" id="HostDB:ENSG00000276405"/>
<dbReference type="GeneTree" id="ENSGT00940000154270"/>
<dbReference type="HOGENOM" id="CLU_077975_9_4_1"/>
<dbReference type="InParanoid" id="A0A0A6YYD4"/>
<dbReference type="OMA" id="WNTRLLC"/>
<dbReference type="OrthoDB" id="9803478at2759"/>
<dbReference type="PAN-GO" id="A0A0A6YYD4">
    <property type="GO annotations" value="2 GO annotations based on evolutionary models"/>
</dbReference>
<dbReference type="ChiTaRS" id="TRBV13">
    <property type="organism name" value="human"/>
</dbReference>
<dbReference type="Pharos" id="A0A0A6YYD4">
    <property type="development level" value="Tdark"/>
</dbReference>
<dbReference type="PRO" id="PR:A0A0A6YYD4"/>
<dbReference type="Proteomes" id="UP000005640">
    <property type="component" value="Chromosome 7"/>
</dbReference>
<dbReference type="RNAct" id="A0A0A6YYD4">
    <property type="molecule type" value="protein"/>
</dbReference>
<dbReference type="Bgee" id="ENSG00000276405">
    <property type="expression patterns" value="Expressed in lymph node and 75 other cell types or tissues"/>
</dbReference>
<dbReference type="GO" id="GO:0005886">
    <property type="term" value="C:plasma membrane"/>
    <property type="evidence" value="ECO:0000318"/>
    <property type="project" value="GO_Central"/>
</dbReference>
<dbReference type="GO" id="GO:0042101">
    <property type="term" value="C:T cell receptor complex"/>
    <property type="evidence" value="ECO:0007669"/>
    <property type="project" value="UniProtKB-KW"/>
</dbReference>
<dbReference type="GO" id="GO:0002250">
    <property type="term" value="P:adaptive immune response"/>
    <property type="evidence" value="ECO:0007669"/>
    <property type="project" value="UniProtKB-KW"/>
</dbReference>
<dbReference type="GO" id="GO:0007166">
    <property type="term" value="P:cell surface receptor signaling pathway"/>
    <property type="evidence" value="ECO:0000318"/>
    <property type="project" value="GO_Central"/>
</dbReference>
<dbReference type="Gene3D" id="2.60.40.10">
    <property type="entry name" value="Immunoglobulins"/>
    <property type="match status" value="1"/>
</dbReference>
<dbReference type="InterPro" id="IPR007110">
    <property type="entry name" value="Ig-like_dom"/>
</dbReference>
<dbReference type="InterPro" id="IPR036179">
    <property type="entry name" value="Ig-like_dom_sf"/>
</dbReference>
<dbReference type="InterPro" id="IPR013783">
    <property type="entry name" value="Ig-like_fold"/>
</dbReference>
<dbReference type="InterPro" id="IPR013106">
    <property type="entry name" value="Ig_V-set"/>
</dbReference>
<dbReference type="InterPro" id="IPR050413">
    <property type="entry name" value="TCR_beta_variable"/>
</dbReference>
<dbReference type="PANTHER" id="PTHR23268:SF75">
    <property type="entry name" value="T CELL RECEPTOR BETA VARIABLE 13"/>
    <property type="match status" value="1"/>
</dbReference>
<dbReference type="PANTHER" id="PTHR23268">
    <property type="entry name" value="T-CELL RECEPTOR BETA CHAIN"/>
    <property type="match status" value="1"/>
</dbReference>
<dbReference type="Pfam" id="PF07686">
    <property type="entry name" value="V-set"/>
    <property type="match status" value="1"/>
</dbReference>
<dbReference type="SMART" id="SM00406">
    <property type="entry name" value="IGv"/>
    <property type="match status" value="1"/>
</dbReference>
<dbReference type="SUPFAM" id="SSF48726">
    <property type="entry name" value="Immunoglobulin"/>
    <property type="match status" value="1"/>
</dbReference>
<dbReference type="PROSITE" id="PS50835">
    <property type="entry name" value="IG_LIKE"/>
    <property type="match status" value="1"/>
</dbReference>
<proteinExistence type="inferred from homology"/>